<feature type="chain" id="PRO_1000051997" description="DNA-directed RNA polymerase subunit gamma">
    <location>
        <begin position="1"/>
        <end position="634"/>
    </location>
</feature>
<feature type="binding site" evidence="1">
    <location>
        <position position="74"/>
    </location>
    <ligand>
        <name>Zn(2+)</name>
        <dbReference type="ChEBI" id="CHEBI:29105"/>
    </ligand>
</feature>
<feature type="binding site" evidence="1">
    <location>
        <position position="76"/>
    </location>
    <ligand>
        <name>Zn(2+)</name>
        <dbReference type="ChEBI" id="CHEBI:29105"/>
    </ligand>
</feature>
<feature type="binding site" evidence="1">
    <location>
        <position position="89"/>
    </location>
    <ligand>
        <name>Zn(2+)</name>
        <dbReference type="ChEBI" id="CHEBI:29105"/>
    </ligand>
</feature>
<feature type="binding site" evidence="1">
    <location>
        <position position="92"/>
    </location>
    <ligand>
        <name>Zn(2+)</name>
        <dbReference type="ChEBI" id="CHEBI:29105"/>
    </ligand>
</feature>
<feature type="binding site" evidence="1">
    <location>
        <position position="471"/>
    </location>
    <ligand>
        <name>Mg(2+)</name>
        <dbReference type="ChEBI" id="CHEBI:18420"/>
    </ligand>
</feature>
<feature type="binding site" evidence="1">
    <location>
        <position position="473"/>
    </location>
    <ligand>
        <name>Mg(2+)</name>
        <dbReference type="ChEBI" id="CHEBI:18420"/>
    </ligand>
</feature>
<feature type="binding site" evidence="1">
    <location>
        <position position="475"/>
    </location>
    <ligand>
        <name>Mg(2+)</name>
        <dbReference type="ChEBI" id="CHEBI:18420"/>
    </ligand>
</feature>
<name>RPOC1_SYNS9</name>
<reference key="1">
    <citation type="submission" date="2005-08" db="EMBL/GenBank/DDBJ databases">
        <title>Complete sequence of Synechococcus sp. CC9902.</title>
        <authorList>
            <person name="Copeland A."/>
            <person name="Lucas S."/>
            <person name="Lapidus A."/>
            <person name="Barry K."/>
            <person name="Detter J.C."/>
            <person name="Glavina T."/>
            <person name="Hammon N."/>
            <person name="Israni S."/>
            <person name="Pitluck S."/>
            <person name="Martinez M."/>
            <person name="Schmutz J."/>
            <person name="Larimer F."/>
            <person name="Land M."/>
            <person name="Kyrpides N."/>
            <person name="Ivanova N."/>
            <person name="Richardson P."/>
        </authorList>
    </citation>
    <scope>NUCLEOTIDE SEQUENCE [LARGE SCALE GENOMIC DNA]</scope>
    <source>
        <strain>CC9902</strain>
    </source>
</reference>
<accession>Q3AZA3</accession>
<dbReference type="EC" id="2.7.7.6" evidence="1"/>
<dbReference type="EMBL" id="CP000097">
    <property type="protein sequence ID" value="ABB25574.1"/>
    <property type="molecule type" value="Genomic_DNA"/>
</dbReference>
<dbReference type="RefSeq" id="WP_011359419.1">
    <property type="nucleotide sequence ID" value="NC_007513.1"/>
</dbReference>
<dbReference type="SMR" id="Q3AZA3"/>
<dbReference type="STRING" id="316279.Syncc9902_0606"/>
<dbReference type="KEGG" id="sye:Syncc9902_0606"/>
<dbReference type="eggNOG" id="COG0086">
    <property type="taxonomic scope" value="Bacteria"/>
</dbReference>
<dbReference type="HOGENOM" id="CLU_030022_2_0_3"/>
<dbReference type="OrthoDB" id="9815296at2"/>
<dbReference type="Proteomes" id="UP000002712">
    <property type="component" value="Chromosome"/>
</dbReference>
<dbReference type="GO" id="GO:0000428">
    <property type="term" value="C:DNA-directed RNA polymerase complex"/>
    <property type="evidence" value="ECO:0007669"/>
    <property type="project" value="UniProtKB-KW"/>
</dbReference>
<dbReference type="GO" id="GO:0003677">
    <property type="term" value="F:DNA binding"/>
    <property type="evidence" value="ECO:0007669"/>
    <property type="project" value="UniProtKB-UniRule"/>
</dbReference>
<dbReference type="GO" id="GO:0003899">
    <property type="term" value="F:DNA-directed RNA polymerase activity"/>
    <property type="evidence" value="ECO:0007669"/>
    <property type="project" value="UniProtKB-UniRule"/>
</dbReference>
<dbReference type="GO" id="GO:0000287">
    <property type="term" value="F:magnesium ion binding"/>
    <property type="evidence" value="ECO:0007669"/>
    <property type="project" value="UniProtKB-UniRule"/>
</dbReference>
<dbReference type="GO" id="GO:0008270">
    <property type="term" value="F:zinc ion binding"/>
    <property type="evidence" value="ECO:0007669"/>
    <property type="project" value="UniProtKB-UniRule"/>
</dbReference>
<dbReference type="GO" id="GO:0006351">
    <property type="term" value="P:DNA-templated transcription"/>
    <property type="evidence" value="ECO:0007669"/>
    <property type="project" value="UniProtKB-UniRule"/>
</dbReference>
<dbReference type="Gene3D" id="1.10.40.90">
    <property type="match status" value="1"/>
</dbReference>
<dbReference type="Gene3D" id="2.40.40.20">
    <property type="match status" value="1"/>
</dbReference>
<dbReference type="Gene3D" id="4.10.860.120">
    <property type="entry name" value="RNA polymerase II, clamp domain"/>
    <property type="match status" value="1"/>
</dbReference>
<dbReference type="Gene3D" id="1.10.274.100">
    <property type="entry name" value="RNA polymerase Rpb1, domain 3"/>
    <property type="match status" value="1"/>
</dbReference>
<dbReference type="HAMAP" id="MF_01323">
    <property type="entry name" value="RNApol_bact_RpoC1"/>
    <property type="match status" value="1"/>
</dbReference>
<dbReference type="InterPro" id="IPR012755">
    <property type="entry name" value="DNA-dir_RpoC1_gamma"/>
</dbReference>
<dbReference type="InterPro" id="IPR045867">
    <property type="entry name" value="DNA-dir_RpoC_beta_prime"/>
</dbReference>
<dbReference type="InterPro" id="IPR000722">
    <property type="entry name" value="RNA_pol_asu"/>
</dbReference>
<dbReference type="InterPro" id="IPR006592">
    <property type="entry name" value="RNA_pol_N"/>
</dbReference>
<dbReference type="InterPro" id="IPR007080">
    <property type="entry name" value="RNA_pol_Rpb1_1"/>
</dbReference>
<dbReference type="InterPro" id="IPR007066">
    <property type="entry name" value="RNA_pol_Rpb1_3"/>
</dbReference>
<dbReference type="InterPro" id="IPR042102">
    <property type="entry name" value="RNA_pol_Rpb1_3_sf"/>
</dbReference>
<dbReference type="InterPro" id="IPR044893">
    <property type="entry name" value="RNA_pol_Rpb1_clamp_domain"/>
</dbReference>
<dbReference type="InterPro" id="IPR034678">
    <property type="entry name" value="RNApol_RpoC1"/>
</dbReference>
<dbReference type="NCBIfam" id="NF002729">
    <property type="entry name" value="PRK02625.1"/>
    <property type="match status" value="1"/>
</dbReference>
<dbReference type="NCBIfam" id="TIGR02387">
    <property type="entry name" value="rpoC1_cyan"/>
    <property type="match status" value="1"/>
</dbReference>
<dbReference type="PANTHER" id="PTHR19376">
    <property type="entry name" value="DNA-DIRECTED RNA POLYMERASE"/>
    <property type="match status" value="1"/>
</dbReference>
<dbReference type="PANTHER" id="PTHR19376:SF54">
    <property type="entry name" value="DNA-DIRECTED RNA POLYMERASE SUBUNIT BETA"/>
    <property type="match status" value="1"/>
</dbReference>
<dbReference type="Pfam" id="PF04997">
    <property type="entry name" value="RNA_pol_Rpb1_1"/>
    <property type="match status" value="1"/>
</dbReference>
<dbReference type="Pfam" id="PF00623">
    <property type="entry name" value="RNA_pol_Rpb1_2"/>
    <property type="match status" value="1"/>
</dbReference>
<dbReference type="Pfam" id="PF04983">
    <property type="entry name" value="RNA_pol_Rpb1_3"/>
    <property type="match status" value="1"/>
</dbReference>
<dbReference type="SMART" id="SM00663">
    <property type="entry name" value="RPOLA_N"/>
    <property type="match status" value="1"/>
</dbReference>
<dbReference type="SUPFAM" id="SSF64484">
    <property type="entry name" value="beta and beta-prime subunits of DNA dependent RNA-polymerase"/>
    <property type="match status" value="1"/>
</dbReference>
<comment type="function">
    <text evidence="1">DNA-dependent RNA polymerase catalyzes the transcription of DNA into RNA using the four ribonucleoside triphosphates as substrates.</text>
</comment>
<comment type="catalytic activity">
    <reaction evidence="1">
        <text>RNA(n) + a ribonucleoside 5'-triphosphate = RNA(n+1) + diphosphate</text>
        <dbReference type="Rhea" id="RHEA:21248"/>
        <dbReference type="Rhea" id="RHEA-COMP:14527"/>
        <dbReference type="Rhea" id="RHEA-COMP:17342"/>
        <dbReference type="ChEBI" id="CHEBI:33019"/>
        <dbReference type="ChEBI" id="CHEBI:61557"/>
        <dbReference type="ChEBI" id="CHEBI:140395"/>
        <dbReference type="EC" id="2.7.7.6"/>
    </reaction>
</comment>
<comment type="cofactor">
    <cofactor evidence="1">
        <name>Mg(2+)</name>
        <dbReference type="ChEBI" id="CHEBI:18420"/>
    </cofactor>
    <text evidence="1">Binds 1 Mg(2+) ion per subunit.</text>
</comment>
<comment type="cofactor">
    <cofactor evidence="1">
        <name>Zn(2+)</name>
        <dbReference type="ChEBI" id="CHEBI:29105"/>
    </cofactor>
    <text evidence="1">Binds 1 Zn(2+) ion per subunit.</text>
</comment>
<comment type="subunit">
    <text evidence="1">In cyanobacteria the RNAP catalytic core is composed of 2 alpha, 1 beta, 1 beta', 1 gamma and 1 omega subunit. When a sigma factor is associated with the core the holoenzyme is formed, which can initiate transcription.</text>
</comment>
<comment type="similarity">
    <text evidence="1">Belongs to the RNA polymerase beta' chain family. RpoC1 subfamily.</text>
</comment>
<sequence>MTNSNLRTENHFDYVKITLASPERVMEWGQRTLPNGQVVGEVTKPETINYRTLKPEMDGLFCEKIFGPSKDWECHCGKYKRVRHRGIVCERCGVEVTESRVRRHRMGFIKLAAPVSHVWYLKGIPSYVAILLDMPLRDVEQIVYFNCYVVLDPGDHKDLKYKQLLTEDEWLEIEDEIYAEESEIENEPVVGIGAEALKQLLEDLSLEEVAQQLREDINGSKGQKRAKLIKRLRVIDNFIATGARPDWMVLDVIPVIPPDLRPMVQLDGGRFATSDLNDLYRRVINRNNRLARLQEILAPEIIVRNEKRMLQEAVDALIDNGRRGRTVVGANNRPLKSLSDIIEGKQGRFRQNLLGKRVDYSGRSVIVVGPKLKMHQCGLPKEMAIELFQPFVIHRLIRQNIVNNIKAAKKLIQRADDEVMQVLQEVIDGHPIMLNRAPTLHRLGIQAFEPKLVDGRAIQLHPLVCPAFNADFDGDQMAVHVPLAIEAQTEARMLMLASNNILSPATGEPIITPSQDMVLGSYYLTALQPDATQPEFGDRSATFAGLDDVIHAFDDTRIGLHDWVWVRFNGEVEDDDELQEPLKSETLSDGTRIEQWTYRRDRFDEEGALISRYVLTTVGRVVMNHTIIDAVASA</sequence>
<protein>
    <recommendedName>
        <fullName evidence="1">DNA-directed RNA polymerase subunit gamma</fullName>
        <shortName evidence="1">RNAP subunit gamma</shortName>
        <ecNumber evidence="1">2.7.7.6</ecNumber>
    </recommendedName>
    <alternativeName>
        <fullName evidence="1">RNA polymerase subunit gamma</fullName>
    </alternativeName>
    <alternativeName>
        <fullName evidence="1">Transcriptase subunit gamma</fullName>
    </alternativeName>
</protein>
<gene>
    <name evidence="1" type="primary">rpoC1</name>
    <name type="ordered locus">Syncc9902_0606</name>
</gene>
<evidence type="ECO:0000255" key="1">
    <source>
        <dbReference type="HAMAP-Rule" id="MF_01323"/>
    </source>
</evidence>
<proteinExistence type="inferred from homology"/>
<organism>
    <name type="scientific">Synechococcus sp. (strain CC9902)</name>
    <dbReference type="NCBI Taxonomy" id="316279"/>
    <lineage>
        <taxon>Bacteria</taxon>
        <taxon>Bacillati</taxon>
        <taxon>Cyanobacteriota</taxon>
        <taxon>Cyanophyceae</taxon>
        <taxon>Synechococcales</taxon>
        <taxon>Synechococcaceae</taxon>
        <taxon>Synechococcus</taxon>
    </lineage>
</organism>
<keyword id="KW-0240">DNA-directed RNA polymerase</keyword>
<keyword id="KW-0460">Magnesium</keyword>
<keyword id="KW-0479">Metal-binding</keyword>
<keyword id="KW-0548">Nucleotidyltransferase</keyword>
<keyword id="KW-1185">Reference proteome</keyword>
<keyword id="KW-0804">Transcription</keyword>
<keyword id="KW-0808">Transferase</keyword>
<keyword id="KW-0862">Zinc</keyword>